<accession>P67499</accession>
<accession>A0A1R3XUM3</accession>
<accession>P96390</accession>
<accession>X2BE98</accession>
<sequence length="263" mass="28547">MVHHGQMHAQPGVGLRPDTPVASGQLPSTSIRSRRSGISKAQRETWERLWPELGLLALPQSPRGTPVDTRAWFGRDAPVVLEIGSGSGTSTLAMAKAEPHVDVIAVDVYRRGLAQLLCAIDKVGSDGINIRLILGNAVDVLQHLIAPDSLCGVRVFFPDPWPKARHHKRRLLQPATMALIADRLVPSGVLHAATDHPGYAEHIAAAGDAEPRLVRVDPDTELLPISVVRPATKYERKAQLGGGAVIELLWKKHGCSERDLKIR</sequence>
<name>TRMB_MYCBO</name>
<reference key="1">
    <citation type="journal article" date="2003" name="Proc. Natl. Acad. Sci. U.S.A.">
        <title>The complete genome sequence of Mycobacterium bovis.</title>
        <authorList>
            <person name="Garnier T."/>
            <person name="Eiglmeier K."/>
            <person name="Camus J.-C."/>
            <person name="Medina N."/>
            <person name="Mansoor H."/>
            <person name="Pryor M."/>
            <person name="Duthoy S."/>
            <person name="Grondin S."/>
            <person name="Lacroix C."/>
            <person name="Monsempe C."/>
            <person name="Simon S."/>
            <person name="Harris B."/>
            <person name="Atkin R."/>
            <person name="Doggett J."/>
            <person name="Mayes R."/>
            <person name="Keating L."/>
            <person name="Wheeler P.R."/>
            <person name="Parkhill J."/>
            <person name="Barrell B.G."/>
            <person name="Cole S.T."/>
            <person name="Gordon S.V."/>
            <person name="Hewinson R.G."/>
        </authorList>
    </citation>
    <scope>NUCLEOTIDE SEQUENCE [LARGE SCALE GENOMIC DNA]</scope>
    <source>
        <strain>ATCC BAA-935 / AF2122/97</strain>
    </source>
</reference>
<reference key="2">
    <citation type="journal article" date="2017" name="Genome Announc.">
        <title>Updated reference genome sequence and annotation of Mycobacterium bovis AF2122/97.</title>
        <authorList>
            <person name="Malone K.M."/>
            <person name="Farrell D."/>
            <person name="Stuber T.P."/>
            <person name="Schubert O.T."/>
            <person name="Aebersold R."/>
            <person name="Robbe-Austerman S."/>
            <person name="Gordon S.V."/>
        </authorList>
    </citation>
    <scope>NUCLEOTIDE SEQUENCE [LARGE SCALE GENOMIC DNA]</scope>
    <scope>GENOME REANNOTATION</scope>
    <source>
        <strain>ATCC BAA-935 / AF2122/97</strain>
    </source>
</reference>
<keyword id="KW-0489">Methyltransferase</keyword>
<keyword id="KW-1185">Reference proteome</keyword>
<keyword id="KW-0949">S-adenosyl-L-methionine</keyword>
<keyword id="KW-0808">Transferase</keyword>
<keyword id="KW-0819">tRNA processing</keyword>
<feature type="chain" id="PRO_0000171349" description="tRNA (guanine-N(7)-)-methyltransferase">
    <location>
        <begin position="1"/>
        <end position="263"/>
    </location>
</feature>
<feature type="region of interest" description="Disordered" evidence="3">
    <location>
        <begin position="1"/>
        <end position="39"/>
    </location>
</feature>
<feature type="active site" evidence="1">
    <location>
        <position position="159"/>
    </location>
</feature>
<feature type="binding site" evidence="2">
    <location>
        <position position="82"/>
    </location>
    <ligand>
        <name>S-adenosyl-L-methionine</name>
        <dbReference type="ChEBI" id="CHEBI:59789"/>
    </ligand>
</feature>
<feature type="binding site" evidence="2">
    <location>
        <position position="107"/>
    </location>
    <ligand>
        <name>S-adenosyl-L-methionine</name>
        <dbReference type="ChEBI" id="CHEBI:59789"/>
    </ligand>
</feature>
<feature type="binding site" evidence="2">
    <location>
        <position position="136"/>
    </location>
    <ligand>
        <name>S-adenosyl-L-methionine</name>
        <dbReference type="ChEBI" id="CHEBI:59789"/>
    </ligand>
</feature>
<feature type="binding site" evidence="2">
    <location>
        <position position="159"/>
    </location>
    <ligand>
        <name>S-adenosyl-L-methionine</name>
        <dbReference type="ChEBI" id="CHEBI:59789"/>
    </ligand>
</feature>
<feature type="binding site" evidence="2">
    <location>
        <position position="163"/>
    </location>
    <ligand>
        <name>substrate</name>
    </ligand>
</feature>
<feature type="binding site" evidence="2">
    <location>
        <position position="195"/>
    </location>
    <ligand>
        <name>substrate</name>
    </ligand>
</feature>
<feature type="binding site" evidence="2">
    <location>
        <begin position="232"/>
        <end position="235"/>
    </location>
    <ligand>
        <name>substrate</name>
    </ligand>
</feature>
<proteinExistence type="inferred from homology"/>
<gene>
    <name evidence="2" type="primary">trmB</name>
    <name type="ordered locus">BQ2027_MB0214C</name>
</gene>
<protein>
    <recommendedName>
        <fullName evidence="2">tRNA (guanine-N(7)-)-methyltransferase</fullName>
        <ecNumber evidence="2">2.1.1.33</ecNumber>
    </recommendedName>
    <alternativeName>
        <fullName evidence="2">tRNA (guanine(46)-N(7))-methyltransferase</fullName>
    </alternativeName>
    <alternativeName>
        <fullName evidence="2">tRNA(m7G46)-methyltransferase</fullName>
    </alternativeName>
</protein>
<comment type="function">
    <text evidence="2">Catalyzes the formation of N(7)-methylguanine at position 46 (m7G46) in tRNA.</text>
</comment>
<comment type="catalytic activity">
    <reaction evidence="2">
        <text>guanosine(46) in tRNA + S-adenosyl-L-methionine = N(7)-methylguanosine(46) in tRNA + S-adenosyl-L-homocysteine</text>
        <dbReference type="Rhea" id="RHEA:42708"/>
        <dbReference type="Rhea" id="RHEA-COMP:10188"/>
        <dbReference type="Rhea" id="RHEA-COMP:10189"/>
        <dbReference type="ChEBI" id="CHEBI:57856"/>
        <dbReference type="ChEBI" id="CHEBI:59789"/>
        <dbReference type="ChEBI" id="CHEBI:74269"/>
        <dbReference type="ChEBI" id="CHEBI:74480"/>
        <dbReference type="EC" id="2.1.1.33"/>
    </reaction>
</comment>
<comment type="pathway">
    <text evidence="2">tRNA modification; N(7)-methylguanine-tRNA biosynthesis.</text>
</comment>
<comment type="similarity">
    <text evidence="2">Belongs to the class I-like SAM-binding methyltransferase superfamily. TrmB family.</text>
</comment>
<organism>
    <name type="scientific">Mycobacterium bovis (strain ATCC BAA-935 / AF2122/97)</name>
    <dbReference type="NCBI Taxonomy" id="233413"/>
    <lineage>
        <taxon>Bacteria</taxon>
        <taxon>Bacillati</taxon>
        <taxon>Actinomycetota</taxon>
        <taxon>Actinomycetes</taxon>
        <taxon>Mycobacteriales</taxon>
        <taxon>Mycobacteriaceae</taxon>
        <taxon>Mycobacterium</taxon>
        <taxon>Mycobacterium tuberculosis complex</taxon>
    </lineage>
</organism>
<dbReference type="EC" id="2.1.1.33" evidence="2"/>
<dbReference type="EMBL" id="LT708304">
    <property type="protein sequence ID" value="SIT98692.1"/>
    <property type="molecule type" value="Genomic_DNA"/>
</dbReference>
<dbReference type="RefSeq" id="NP_853879.1">
    <property type="nucleotide sequence ID" value="NC_002945.3"/>
</dbReference>
<dbReference type="RefSeq" id="WP_003401204.1">
    <property type="nucleotide sequence ID" value="NC_002945.4"/>
</dbReference>
<dbReference type="SMR" id="P67499"/>
<dbReference type="GeneID" id="45424179"/>
<dbReference type="PATRIC" id="fig|233413.5.peg.240"/>
<dbReference type="UniPathway" id="UPA00989"/>
<dbReference type="Proteomes" id="UP000001419">
    <property type="component" value="Chromosome"/>
</dbReference>
<dbReference type="GO" id="GO:0043527">
    <property type="term" value="C:tRNA methyltransferase complex"/>
    <property type="evidence" value="ECO:0007669"/>
    <property type="project" value="TreeGrafter"/>
</dbReference>
<dbReference type="GO" id="GO:0008176">
    <property type="term" value="F:tRNA (guanine(46)-N7)-methyltransferase activity"/>
    <property type="evidence" value="ECO:0007669"/>
    <property type="project" value="UniProtKB-UniRule"/>
</dbReference>
<dbReference type="CDD" id="cd02440">
    <property type="entry name" value="AdoMet_MTases"/>
    <property type="match status" value="1"/>
</dbReference>
<dbReference type="FunFam" id="3.40.50.150:FF:000035">
    <property type="entry name" value="tRNA (guanine-N(7)-)-methyltransferase"/>
    <property type="match status" value="1"/>
</dbReference>
<dbReference type="Gene3D" id="3.40.50.150">
    <property type="entry name" value="Vaccinia Virus protein VP39"/>
    <property type="match status" value="1"/>
</dbReference>
<dbReference type="HAMAP" id="MF_01057">
    <property type="entry name" value="tRNA_methyltr_TrmB"/>
    <property type="match status" value="1"/>
</dbReference>
<dbReference type="InterPro" id="IPR029063">
    <property type="entry name" value="SAM-dependent_MTases_sf"/>
</dbReference>
<dbReference type="InterPro" id="IPR003358">
    <property type="entry name" value="tRNA_(Gua-N-7)_MeTrfase_Trmb"/>
</dbReference>
<dbReference type="InterPro" id="IPR055361">
    <property type="entry name" value="tRNA_methyltr_TrmB_bact"/>
</dbReference>
<dbReference type="NCBIfam" id="TIGR00091">
    <property type="entry name" value="tRNA (guanosine(46)-N7)-methyltransferase TrmB"/>
    <property type="match status" value="1"/>
</dbReference>
<dbReference type="PANTHER" id="PTHR23417">
    <property type="entry name" value="3-DEOXY-D-MANNO-OCTULOSONIC-ACID TRANSFERASE/TRNA GUANINE-N 7 - -METHYLTRANSFERASE"/>
    <property type="match status" value="1"/>
</dbReference>
<dbReference type="PANTHER" id="PTHR23417:SF14">
    <property type="entry name" value="PENTACOTRIPEPTIDE-REPEAT REGION OF PRORP DOMAIN-CONTAINING PROTEIN"/>
    <property type="match status" value="1"/>
</dbReference>
<dbReference type="Pfam" id="PF02390">
    <property type="entry name" value="Methyltransf_4"/>
    <property type="match status" value="1"/>
</dbReference>
<dbReference type="SUPFAM" id="SSF53335">
    <property type="entry name" value="S-adenosyl-L-methionine-dependent methyltransferases"/>
    <property type="match status" value="1"/>
</dbReference>
<dbReference type="PROSITE" id="PS51625">
    <property type="entry name" value="SAM_MT_TRMB"/>
    <property type="match status" value="1"/>
</dbReference>
<evidence type="ECO:0000250" key="1"/>
<evidence type="ECO:0000255" key="2">
    <source>
        <dbReference type="HAMAP-Rule" id="MF_01057"/>
    </source>
</evidence>
<evidence type="ECO:0000256" key="3">
    <source>
        <dbReference type="SAM" id="MobiDB-lite"/>
    </source>
</evidence>